<keyword id="KW-0963">Cytoplasm</keyword>
<keyword id="KW-0378">Hydrolase</keyword>
<keyword id="KW-0540">Nuclease</keyword>
<keyword id="KW-0690">Ribosome biogenesis</keyword>
<feature type="chain" id="PRO_1000131066" description="Putative pre-16S rRNA nuclease">
    <location>
        <begin position="1"/>
        <end position="138"/>
    </location>
</feature>
<dbReference type="EC" id="3.1.-.-" evidence="1"/>
<dbReference type="EMBL" id="CP001138">
    <property type="protein sequence ID" value="ACH48585.1"/>
    <property type="molecule type" value="Genomic_DNA"/>
</dbReference>
<dbReference type="SMR" id="B5F5M2"/>
<dbReference type="KEGG" id="sea:SeAg_B3260"/>
<dbReference type="HOGENOM" id="CLU_098240_3_0_6"/>
<dbReference type="Proteomes" id="UP000008819">
    <property type="component" value="Chromosome"/>
</dbReference>
<dbReference type="GO" id="GO:0005829">
    <property type="term" value="C:cytosol"/>
    <property type="evidence" value="ECO:0007669"/>
    <property type="project" value="TreeGrafter"/>
</dbReference>
<dbReference type="GO" id="GO:0004518">
    <property type="term" value="F:nuclease activity"/>
    <property type="evidence" value="ECO:0007669"/>
    <property type="project" value="UniProtKB-KW"/>
</dbReference>
<dbReference type="GO" id="GO:0000967">
    <property type="term" value="P:rRNA 5'-end processing"/>
    <property type="evidence" value="ECO:0007669"/>
    <property type="project" value="UniProtKB-UniRule"/>
</dbReference>
<dbReference type="CDD" id="cd16964">
    <property type="entry name" value="YqgF"/>
    <property type="match status" value="1"/>
</dbReference>
<dbReference type="FunFam" id="3.30.420.140:FF:000002">
    <property type="entry name" value="Putative pre-16S rRNA nuclease"/>
    <property type="match status" value="1"/>
</dbReference>
<dbReference type="Gene3D" id="3.30.420.140">
    <property type="entry name" value="YqgF/RNase H-like domain"/>
    <property type="match status" value="1"/>
</dbReference>
<dbReference type="HAMAP" id="MF_00651">
    <property type="entry name" value="Nuclease_YqgF"/>
    <property type="match status" value="1"/>
</dbReference>
<dbReference type="InterPro" id="IPR012337">
    <property type="entry name" value="RNaseH-like_sf"/>
</dbReference>
<dbReference type="InterPro" id="IPR005227">
    <property type="entry name" value="YqgF"/>
</dbReference>
<dbReference type="InterPro" id="IPR006641">
    <property type="entry name" value="YqgF/RNaseH-like_dom"/>
</dbReference>
<dbReference type="InterPro" id="IPR037027">
    <property type="entry name" value="YqgF/RNaseH-like_dom_sf"/>
</dbReference>
<dbReference type="NCBIfam" id="TIGR00250">
    <property type="entry name" value="RNAse_H_YqgF"/>
    <property type="match status" value="1"/>
</dbReference>
<dbReference type="PANTHER" id="PTHR33317">
    <property type="entry name" value="POLYNUCLEOTIDYL TRANSFERASE, RIBONUCLEASE H-LIKE SUPERFAMILY PROTEIN"/>
    <property type="match status" value="1"/>
</dbReference>
<dbReference type="PANTHER" id="PTHR33317:SF4">
    <property type="entry name" value="POLYNUCLEOTIDYL TRANSFERASE, RIBONUCLEASE H-LIKE SUPERFAMILY PROTEIN"/>
    <property type="match status" value="1"/>
</dbReference>
<dbReference type="Pfam" id="PF03652">
    <property type="entry name" value="RuvX"/>
    <property type="match status" value="1"/>
</dbReference>
<dbReference type="SMART" id="SM00732">
    <property type="entry name" value="YqgFc"/>
    <property type="match status" value="1"/>
</dbReference>
<dbReference type="SUPFAM" id="SSF53098">
    <property type="entry name" value="Ribonuclease H-like"/>
    <property type="match status" value="1"/>
</dbReference>
<proteinExistence type="inferred from homology"/>
<comment type="function">
    <text evidence="1">Could be a nuclease involved in processing of the 5'-end of pre-16S rRNA.</text>
</comment>
<comment type="subcellular location">
    <subcellularLocation>
        <location evidence="1">Cytoplasm</location>
    </subcellularLocation>
</comment>
<comment type="similarity">
    <text evidence="1">Belongs to the YqgF nuclease family.</text>
</comment>
<protein>
    <recommendedName>
        <fullName evidence="1">Putative pre-16S rRNA nuclease</fullName>
        <ecNumber evidence="1">3.1.-.-</ecNumber>
    </recommendedName>
</protein>
<sequence length="138" mass="15218">MSDTLLAFDFGTKSIGVAIGQRITGTARPLPAIKAQDGTPDWTLIERLLKEWQPDEIIVGLPLNMDGTEQPLTARARKFANRIHGRFGVTVTLHDERLSTVEARSGLFERGGYRALNKGKVDSASAVIILESYFEQGY</sequence>
<gene>
    <name evidence="1" type="primary">yqgF</name>
    <name type="ordered locus">SeAg_B3260</name>
</gene>
<organism>
    <name type="scientific">Salmonella agona (strain SL483)</name>
    <dbReference type="NCBI Taxonomy" id="454166"/>
    <lineage>
        <taxon>Bacteria</taxon>
        <taxon>Pseudomonadati</taxon>
        <taxon>Pseudomonadota</taxon>
        <taxon>Gammaproteobacteria</taxon>
        <taxon>Enterobacterales</taxon>
        <taxon>Enterobacteriaceae</taxon>
        <taxon>Salmonella</taxon>
    </lineage>
</organism>
<reference key="1">
    <citation type="journal article" date="2011" name="J. Bacteriol.">
        <title>Comparative genomics of 28 Salmonella enterica isolates: evidence for CRISPR-mediated adaptive sublineage evolution.</title>
        <authorList>
            <person name="Fricke W.F."/>
            <person name="Mammel M.K."/>
            <person name="McDermott P.F."/>
            <person name="Tartera C."/>
            <person name="White D.G."/>
            <person name="Leclerc J.E."/>
            <person name="Ravel J."/>
            <person name="Cebula T.A."/>
        </authorList>
    </citation>
    <scope>NUCLEOTIDE SEQUENCE [LARGE SCALE GENOMIC DNA]</scope>
    <source>
        <strain>SL483</strain>
    </source>
</reference>
<accession>B5F5M2</accession>
<evidence type="ECO:0000255" key="1">
    <source>
        <dbReference type="HAMAP-Rule" id="MF_00651"/>
    </source>
</evidence>
<name>YQGF_SALA4</name>